<dbReference type="EMBL" id="FM204883">
    <property type="protein sequence ID" value="CAW93371.1"/>
    <property type="molecule type" value="Genomic_DNA"/>
</dbReference>
<dbReference type="RefSeq" id="WP_012679366.1">
    <property type="nucleotide sequence ID" value="NC_012471.1"/>
</dbReference>
<dbReference type="SMR" id="C0M695"/>
<dbReference type="KEGG" id="seu:SEQ_0881"/>
<dbReference type="HOGENOM" id="CLU_103507_2_1_9"/>
<dbReference type="OrthoDB" id="9803541at2"/>
<dbReference type="Proteomes" id="UP000001365">
    <property type="component" value="Chromosome"/>
</dbReference>
<dbReference type="GO" id="GO:0022625">
    <property type="term" value="C:cytosolic large ribosomal subunit"/>
    <property type="evidence" value="ECO:0007669"/>
    <property type="project" value="TreeGrafter"/>
</dbReference>
<dbReference type="GO" id="GO:0003735">
    <property type="term" value="F:structural constituent of ribosome"/>
    <property type="evidence" value="ECO:0007669"/>
    <property type="project" value="InterPro"/>
</dbReference>
<dbReference type="GO" id="GO:0006412">
    <property type="term" value="P:translation"/>
    <property type="evidence" value="ECO:0007669"/>
    <property type="project" value="UniProtKB-UniRule"/>
</dbReference>
<dbReference type="FunFam" id="2.30.30.790:FF:000001">
    <property type="entry name" value="50S ribosomal protein L19"/>
    <property type="match status" value="1"/>
</dbReference>
<dbReference type="Gene3D" id="2.30.30.790">
    <property type="match status" value="1"/>
</dbReference>
<dbReference type="HAMAP" id="MF_00402">
    <property type="entry name" value="Ribosomal_bL19"/>
    <property type="match status" value="1"/>
</dbReference>
<dbReference type="InterPro" id="IPR001857">
    <property type="entry name" value="Ribosomal_bL19"/>
</dbReference>
<dbReference type="InterPro" id="IPR018257">
    <property type="entry name" value="Ribosomal_bL19_CS"/>
</dbReference>
<dbReference type="InterPro" id="IPR038657">
    <property type="entry name" value="Ribosomal_bL19_sf"/>
</dbReference>
<dbReference type="InterPro" id="IPR008991">
    <property type="entry name" value="Translation_prot_SH3-like_sf"/>
</dbReference>
<dbReference type="NCBIfam" id="TIGR01024">
    <property type="entry name" value="rplS_bact"/>
    <property type="match status" value="1"/>
</dbReference>
<dbReference type="PANTHER" id="PTHR15680:SF9">
    <property type="entry name" value="LARGE RIBOSOMAL SUBUNIT PROTEIN BL19M"/>
    <property type="match status" value="1"/>
</dbReference>
<dbReference type="PANTHER" id="PTHR15680">
    <property type="entry name" value="RIBOSOMAL PROTEIN L19"/>
    <property type="match status" value="1"/>
</dbReference>
<dbReference type="Pfam" id="PF01245">
    <property type="entry name" value="Ribosomal_L19"/>
    <property type="match status" value="1"/>
</dbReference>
<dbReference type="PIRSF" id="PIRSF002191">
    <property type="entry name" value="Ribosomal_L19"/>
    <property type="match status" value="1"/>
</dbReference>
<dbReference type="PRINTS" id="PR00061">
    <property type="entry name" value="RIBOSOMALL19"/>
</dbReference>
<dbReference type="SUPFAM" id="SSF50104">
    <property type="entry name" value="Translation proteins SH3-like domain"/>
    <property type="match status" value="1"/>
</dbReference>
<dbReference type="PROSITE" id="PS01015">
    <property type="entry name" value="RIBOSOMAL_L19"/>
    <property type="match status" value="1"/>
</dbReference>
<name>RL19_STRE4</name>
<comment type="function">
    <text evidence="1">This protein is located at the 30S-50S ribosomal subunit interface and may play a role in the structure and function of the aminoacyl-tRNA binding site.</text>
</comment>
<comment type="similarity">
    <text evidence="1">Belongs to the bacterial ribosomal protein bL19 family.</text>
</comment>
<gene>
    <name evidence="1" type="primary">rplS</name>
    <name type="ordered locus">SEQ_0881</name>
</gene>
<protein>
    <recommendedName>
        <fullName evidence="1">Large ribosomal subunit protein bL19</fullName>
    </recommendedName>
    <alternativeName>
        <fullName evidence="2">50S ribosomal protein L19</fullName>
    </alternativeName>
</protein>
<accession>C0M695</accession>
<proteinExistence type="inferred from homology"/>
<evidence type="ECO:0000255" key="1">
    <source>
        <dbReference type="HAMAP-Rule" id="MF_00402"/>
    </source>
</evidence>
<evidence type="ECO:0000305" key="2"/>
<reference key="1">
    <citation type="journal article" date="2009" name="PLoS Pathog.">
        <title>Genomic evidence for the evolution of Streptococcus equi: host restriction, increased virulence, and genetic exchange with human pathogens.</title>
        <authorList>
            <person name="Holden M.T.G."/>
            <person name="Heather Z."/>
            <person name="Paillot R."/>
            <person name="Steward K.F."/>
            <person name="Webb K."/>
            <person name="Ainslie F."/>
            <person name="Jourdan T."/>
            <person name="Bason N.C."/>
            <person name="Holroyd N.E."/>
            <person name="Mungall K."/>
            <person name="Quail M.A."/>
            <person name="Sanders M."/>
            <person name="Simmonds M."/>
            <person name="Willey D."/>
            <person name="Brooks K."/>
            <person name="Aanensen D.M."/>
            <person name="Spratt B.G."/>
            <person name="Jolley K.A."/>
            <person name="Maiden M.C.J."/>
            <person name="Kehoe M."/>
            <person name="Chanter N."/>
            <person name="Bentley S.D."/>
            <person name="Robinson C."/>
            <person name="Maskell D.J."/>
            <person name="Parkhill J."/>
            <person name="Waller A.S."/>
        </authorList>
    </citation>
    <scope>NUCLEOTIDE SEQUENCE [LARGE SCALE GENOMIC DNA]</scope>
    <source>
        <strain>4047</strain>
    </source>
</reference>
<keyword id="KW-0687">Ribonucleoprotein</keyword>
<keyword id="KW-0689">Ribosomal protein</keyword>
<feature type="chain" id="PRO_1000193891" description="Large ribosomal subunit protein bL19">
    <location>
        <begin position="1"/>
        <end position="115"/>
    </location>
</feature>
<organism>
    <name type="scientific">Streptococcus equi subsp. equi (strain 4047)</name>
    <dbReference type="NCBI Taxonomy" id="553482"/>
    <lineage>
        <taxon>Bacteria</taxon>
        <taxon>Bacillati</taxon>
        <taxon>Bacillota</taxon>
        <taxon>Bacilli</taxon>
        <taxon>Lactobacillales</taxon>
        <taxon>Streptococcaceae</taxon>
        <taxon>Streptococcus</taxon>
    </lineage>
</organism>
<sequence>MNPLIQSLTEGQLRTDIPSFRPGDTVRVHAKVVEGSRERIQIFEGVVISRKSQGISEMYTVRKISSGIGVERTFPIHTPRVEKIEVVRHGKVRRAKLYYLRALQGKAARIKEIRR</sequence>